<evidence type="ECO:0000255" key="1">
    <source>
        <dbReference type="HAMAP-Rule" id="MF_00332"/>
    </source>
</evidence>
<evidence type="ECO:0000256" key="2">
    <source>
        <dbReference type="SAM" id="MobiDB-lite"/>
    </source>
</evidence>
<protein>
    <recommendedName>
        <fullName evidence="1">Chaperone protein DnaK</fullName>
    </recommendedName>
    <alternativeName>
        <fullName evidence="1">HSP70</fullName>
    </alternativeName>
    <alternativeName>
        <fullName evidence="1">Heat shock 70 kDa protein</fullName>
    </alternativeName>
    <alternativeName>
        <fullName evidence="1">Heat shock protein 70</fullName>
    </alternativeName>
</protein>
<keyword id="KW-0067">ATP-binding</keyword>
<keyword id="KW-0143">Chaperone</keyword>
<keyword id="KW-0547">Nucleotide-binding</keyword>
<keyword id="KW-0597">Phosphoprotein</keyword>
<keyword id="KW-1185">Reference proteome</keyword>
<keyword id="KW-0346">Stress response</keyword>
<comment type="function">
    <text evidence="1">Acts as a chaperone.</text>
</comment>
<comment type="induction">
    <text evidence="1">By stress conditions e.g. heat shock.</text>
</comment>
<comment type="similarity">
    <text evidence="1">Belongs to the heat shock protein 70 family.</text>
</comment>
<sequence length="647" mass="70040">MSKIIGIDLGTTNSCVSIMEGSQPKVLENAEGARTTPSVVAFTEDGEKLVGQPAKRQAVTNPENTIFAVKRLIGRSFEDPTVKKDIAAAPFKIVNSEKGDAWIEAKGEKYSPSQISAFILQKMKETAEKYLGQEVTKAVITVPAYFNDAQRQATKDAGKIAGLEVLRIINEPTAASLAYGLDKKQNKKIAVYDLGGGTFDVSILELGDGVFEVKSTNGDTFLGGEDFDNTIVDYLIGEFKKDSGIDLRSDKLALQRLKEAAEKAKIELSSAEQTDVNLPFITADKTGPKHINLKMTRAKLEALVEDLISRTLPPCKTALKDAGLTASEIDEIVMVGGMTRMPKVLSEVKNFFGKEPNKSVNPDEVVAMGAAIQAGVLQGDVKDVLLLDVTPLSLGIETLGGVSTKLIEKNTTIPTKKSQVFSTADDNQPAVSIRVLQGEREMASDNKMLGNFELVGIAPAPRGVPQIEVTFDIDANGIVSVSAKDKGTGKEQKIQIQASGGLSDEEIEKMVKDAEANKEEDKKKRESVDVRNQADTLLHSTEKNLKEHGAKVSDADKKAIEDASTDLKEAIKGTDTEEIKKKTETLVQASMKLGEAIYKSQEKKEGSPKEGDKNDEGKKDDNVVDADFEEVKEESKEGKEEDKEKSA</sequence>
<proteinExistence type="inferred from homology"/>
<dbReference type="EMBL" id="CP000084">
    <property type="protein sequence ID" value="AAZ21190.1"/>
    <property type="molecule type" value="Genomic_DNA"/>
</dbReference>
<dbReference type="RefSeq" id="WP_006997539.1">
    <property type="nucleotide sequence ID" value="NC_007205.1"/>
</dbReference>
<dbReference type="SMR" id="Q4FNP9"/>
<dbReference type="STRING" id="335992.SAR11_0368"/>
<dbReference type="GeneID" id="66294866"/>
<dbReference type="KEGG" id="pub:SAR11_0368"/>
<dbReference type="eggNOG" id="COG0443">
    <property type="taxonomic scope" value="Bacteria"/>
</dbReference>
<dbReference type="HOGENOM" id="CLU_005965_2_1_5"/>
<dbReference type="OrthoDB" id="9766019at2"/>
<dbReference type="Proteomes" id="UP000002528">
    <property type="component" value="Chromosome"/>
</dbReference>
<dbReference type="GO" id="GO:0005524">
    <property type="term" value="F:ATP binding"/>
    <property type="evidence" value="ECO:0007669"/>
    <property type="project" value="UniProtKB-UniRule"/>
</dbReference>
<dbReference type="GO" id="GO:0140662">
    <property type="term" value="F:ATP-dependent protein folding chaperone"/>
    <property type="evidence" value="ECO:0007669"/>
    <property type="project" value="InterPro"/>
</dbReference>
<dbReference type="GO" id="GO:0051082">
    <property type="term" value="F:unfolded protein binding"/>
    <property type="evidence" value="ECO:0007669"/>
    <property type="project" value="InterPro"/>
</dbReference>
<dbReference type="CDD" id="cd11733">
    <property type="entry name" value="ASKHA_NBD_HSP70_HSPA9"/>
    <property type="match status" value="1"/>
</dbReference>
<dbReference type="FunFam" id="2.60.34.10:FF:000014">
    <property type="entry name" value="Chaperone protein DnaK HSP70"/>
    <property type="match status" value="1"/>
</dbReference>
<dbReference type="FunFam" id="3.30.420.40:FF:000020">
    <property type="entry name" value="Chaperone protein HscA homolog"/>
    <property type="match status" value="1"/>
</dbReference>
<dbReference type="FunFam" id="3.30.30.30:FF:000003">
    <property type="entry name" value="Heat shock protein 9"/>
    <property type="match status" value="1"/>
</dbReference>
<dbReference type="FunFam" id="1.20.1270.10:FF:000001">
    <property type="entry name" value="Molecular chaperone DnaK"/>
    <property type="match status" value="1"/>
</dbReference>
<dbReference type="FunFam" id="3.30.420.40:FF:000004">
    <property type="entry name" value="Molecular chaperone DnaK"/>
    <property type="match status" value="1"/>
</dbReference>
<dbReference type="FunFam" id="3.90.640.10:FF:000003">
    <property type="entry name" value="Molecular chaperone DnaK"/>
    <property type="match status" value="1"/>
</dbReference>
<dbReference type="Gene3D" id="1.20.1270.10">
    <property type="match status" value="1"/>
</dbReference>
<dbReference type="Gene3D" id="3.30.420.40">
    <property type="match status" value="2"/>
</dbReference>
<dbReference type="Gene3D" id="3.90.640.10">
    <property type="entry name" value="Actin, Chain A, domain 4"/>
    <property type="match status" value="1"/>
</dbReference>
<dbReference type="Gene3D" id="2.60.34.10">
    <property type="entry name" value="Substrate Binding Domain Of DNAk, Chain A, domain 1"/>
    <property type="match status" value="1"/>
</dbReference>
<dbReference type="HAMAP" id="MF_00332">
    <property type="entry name" value="DnaK"/>
    <property type="match status" value="1"/>
</dbReference>
<dbReference type="InterPro" id="IPR043129">
    <property type="entry name" value="ATPase_NBD"/>
</dbReference>
<dbReference type="InterPro" id="IPR012725">
    <property type="entry name" value="Chaperone_DnaK"/>
</dbReference>
<dbReference type="InterPro" id="IPR018181">
    <property type="entry name" value="Heat_shock_70_CS"/>
</dbReference>
<dbReference type="InterPro" id="IPR029048">
    <property type="entry name" value="HSP70_C_sf"/>
</dbReference>
<dbReference type="InterPro" id="IPR029047">
    <property type="entry name" value="HSP70_peptide-bd_sf"/>
</dbReference>
<dbReference type="InterPro" id="IPR013126">
    <property type="entry name" value="Hsp_70_fam"/>
</dbReference>
<dbReference type="NCBIfam" id="NF001413">
    <property type="entry name" value="PRK00290.1"/>
    <property type="match status" value="1"/>
</dbReference>
<dbReference type="NCBIfam" id="NF003520">
    <property type="entry name" value="PRK05183.1"/>
    <property type="match status" value="1"/>
</dbReference>
<dbReference type="NCBIfam" id="TIGR02350">
    <property type="entry name" value="prok_dnaK"/>
    <property type="match status" value="1"/>
</dbReference>
<dbReference type="PANTHER" id="PTHR19375">
    <property type="entry name" value="HEAT SHOCK PROTEIN 70KDA"/>
    <property type="match status" value="1"/>
</dbReference>
<dbReference type="Pfam" id="PF00012">
    <property type="entry name" value="HSP70"/>
    <property type="match status" value="1"/>
</dbReference>
<dbReference type="PRINTS" id="PR00301">
    <property type="entry name" value="HEATSHOCK70"/>
</dbReference>
<dbReference type="SUPFAM" id="SSF53067">
    <property type="entry name" value="Actin-like ATPase domain"/>
    <property type="match status" value="2"/>
</dbReference>
<dbReference type="SUPFAM" id="SSF100934">
    <property type="entry name" value="Heat shock protein 70kD (HSP70), C-terminal subdomain"/>
    <property type="match status" value="1"/>
</dbReference>
<dbReference type="SUPFAM" id="SSF100920">
    <property type="entry name" value="Heat shock protein 70kD (HSP70), peptide-binding domain"/>
    <property type="match status" value="1"/>
</dbReference>
<dbReference type="PROSITE" id="PS00297">
    <property type="entry name" value="HSP70_1"/>
    <property type="match status" value="1"/>
</dbReference>
<dbReference type="PROSITE" id="PS00329">
    <property type="entry name" value="HSP70_2"/>
    <property type="match status" value="1"/>
</dbReference>
<dbReference type="PROSITE" id="PS01036">
    <property type="entry name" value="HSP70_3"/>
    <property type="match status" value="1"/>
</dbReference>
<accession>Q4FNP9</accession>
<reference key="1">
    <citation type="journal article" date="2005" name="Science">
        <title>Genome streamlining in a cosmopolitan oceanic bacterium.</title>
        <authorList>
            <person name="Giovannoni S.J."/>
            <person name="Tripp H.J."/>
            <person name="Givan S."/>
            <person name="Podar M."/>
            <person name="Vergin K.L."/>
            <person name="Baptista D."/>
            <person name="Bibbs L."/>
            <person name="Eads J."/>
            <person name="Richardson T.H."/>
            <person name="Noordewier M."/>
            <person name="Rappe M.S."/>
            <person name="Short J.M."/>
            <person name="Carrington J.C."/>
            <person name="Mathur E.J."/>
        </authorList>
    </citation>
    <scope>NUCLEOTIDE SEQUENCE [LARGE SCALE GENOMIC DNA]</scope>
    <source>
        <strain>HTCC1062</strain>
    </source>
</reference>
<feature type="chain" id="PRO_0000225990" description="Chaperone protein DnaK">
    <location>
        <begin position="1"/>
        <end position="647"/>
    </location>
</feature>
<feature type="region of interest" description="Disordered" evidence="2">
    <location>
        <begin position="514"/>
        <end position="557"/>
    </location>
</feature>
<feature type="region of interest" description="Disordered" evidence="2">
    <location>
        <begin position="596"/>
        <end position="647"/>
    </location>
</feature>
<feature type="compositionally biased region" description="Basic and acidic residues" evidence="2">
    <location>
        <begin position="514"/>
        <end position="529"/>
    </location>
</feature>
<feature type="compositionally biased region" description="Basic and acidic residues" evidence="2">
    <location>
        <begin position="540"/>
        <end position="557"/>
    </location>
</feature>
<feature type="compositionally biased region" description="Basic and acidic residues" evidence="2">
    <location>
        <begin position="600"/>
        <end position="622"/>
    </location>
</feature>
<feature type="compositionally biased region" description="Acidic residues" evidence="2">
    <location>
        <begin position="623"/>
        <end position="632"/>
    </location>
</feature>
<feature type="compositionally biased region" description="Basic and acidic residues" evidence="2">
    <location>
        <begin position="633"/>
        <end position="647"/>
    </location>
</feature>
<feature type="modified residue" description="Phosphothreonine; by autocatalysis" evidence="1">
    <location>
        <position position="198"/>
    </location>
</feature>
<organism>
    <name type="scientific">Pelagibacter ubique (strain HTCC1062)</name>
    <dbReference type="NCBI Taxonomy" id="335992"/>
    <lineage>
        <taxon>Bacteria</taxon>
        <taxon>Pseudomonadati</taxon>
        <taxon>Pseudomonadota</taxon>
        <taxon>Alphaproteobacteria</taxon>
        <taxon>Candidatus Pelagibacterales</taxon>
        <taxon>Candidatus Pelagibacteraceae</taxon>
        <taxon>Candidatus Pelagibacter</taxon>
    </lineage>
</organism>
<name>DNAK_PELUB</name>
<gene>
    <name evidence="1" type="primary">dnaK</name>
    <name type="ordered locus">SAR11_0368</name>
</gene>